<gene>
    <name evidence="1" type="primary">mnmE</name>
    <name evidence="1" type="synonym">trmE</name>
    <name type="ordered locus">RB11877</name>
</gene>
<keyword id="KW-0963">Cytoplasm</keyword>
<keyword id="KW-0342">GTP-binding</keyword>
<keyword id="KW-0378">Hydrolase</keyword>
<keyword id="KW-0460">Magnesium</keyword>
<keyword id="KW-0479">Metal-binding</keyword>
<keyword id="KW-0547">Nucleotide-binding</keyword>
<keyword id="KW-0630">Potassium</keyword>
<keyword id="KW-1185">Reference proteome</keyword>
<keyword id="KW-0819">tRNA processing</keyword>
<comment type="function">
    <text evidence="1">Exhibits a very high intrinsic GTPase hydrolysis rate. Involved in the addition of a carboxymethylaminomethyl (cmnm) group at the wobble position (U34) of certain tRNAs, forming tRNA-cmnm(5)s(2)U34.</text>
</comment>
<comment type="cofactor">
    <cofactor evidence="1">
        <name>K(+)</name>
        <dbReference type="ChEBI" id="CHEBI:29103"/>
    </cofactor>
    <text evidence="1">Binds 1 potassium ion per subunit.</text>
</comment>
<comment type="subunit">
    <text evidence="1">Homodimer. Heterotetramer of two MnmE and two MnmG subunits.</text>
</comment>
<comment type="subcellular location">
    <subcellularLocation>
        <location evidence="1">Cytoplasm</location>
    </subcellularLocation>
</comment>
<comment type="similarity">
    <text evidence="1">Belongs to the TRAFAC class TrmE-Era-EngA-EngB-Septin-like GTPase superfamily. TrmE GTPase family.</text>
</comment>
<dbReference type="EC" id="3.6.-.-" evidence="1"/>
<dbReference type="EMBL" id="BX294154">
    <property type="protein sequence ID" value="CAD77275.1"/>
    <property type="molecule type" value="Genomic_DNA"/>
</dbReference>
<dbReference type="RefSeq" id="NP_870200.1">
    <property type="nucleotide sequence ID" value="NC_005027.1"/>
</dbReference>
<dbReference type="RefSeq" id="WP_011123471.1">
    <property type="nucleotide sequence ID" value="NC_005027.1"/>
</dbReference>
<dbReference type="SMR" id="Q7UJI3"/>
<dbReference type="FunCoup" id="Q7UJI3">
    <property type="interactions" value="529"/>
</dbReference>
<dbReference type="STRING" id="243090.RB11877"/>
<dbReference type="EnsemblBacteria" id="CAD77275">
    <property type="protein sequence ID" value="CAD77275"/>
    <property type="gene ID" value="RB11877"/>
</dbReference>
<dbReference type="KEGG" id="rba:RB11877"/>
<dbReference type="PATRIC" id="fig|243090.15.peg.5729"/>
<dbReference type="eggNOG" id="COG0486">
    <property type="taxonomic scope" value="Bacteria"/>
</dbReference>
<dbReference type="HOGENOM" id="CLU_019624_4_1_0"/>
<dbReference type="InParanoid" id="Q7UJI3"/>
<dbReference type="OrthoDB" id="9805918at2"/>
<dbReference type="Proteomes" id="UP000001025">
    <property type="component" value="Chromosome"/>
</dbReference>
<dbReference type="GO" id="GO:0005737">
    <property type="term" value="C:cytoplasm"/>
    <property type="evidence" value="ECO:0000318"/>
    <property type="project" value="GO_Central"/>
</dbReference>
<dbReference type="GO" id="GO:0005829">
    <property type="term" value="C:cytosol"/>
    <property type="evidence" value="ECO:0000318"/>
    <property type="project" value="GO_Central"/>
</dbReference>
<dbReference type="GO" id="GO:0005525">
    <property type="term" value="F:GTP binding"/>
    <property type="evidence" value="ECO:0007669"/>
    <property type="project" value="UniProtKB-UniRule"/>
</dbReference>
<dbReference type="GO" id="GO:0003924">
    <property type="term" value="F:GTPase activity"/>
    <property type="evidence" value="ECO:0007669"/>
    <property type="project" value="UniProtKB-UniRule"/>
</dbReference>
<dbReference type="GO" id="GO:0046872">
    <property type="term" value="F:metal ion binding"/>
    <property type="evidence" value="ECO:0007669"/>
    <property type="project" value="UniProtKB-KW"/>
</dbReference>
<dbReference type="GO" id="GO:0030488">
    <property type="term" value="P:tRNA methylation"/>
    <property type="evidence" value="ECO:0000318"/>
    <property type="project" value="GO_Central"/>
</dbReference>
<dbReference type="GO" id="GO:0002098">
    <property type="term" value="P:tRNA wobble uridine modification"/>
    <property type="evidence" value="ECO:0000318"/>
    <property type="project" value="GO_Central"/>
</dbReference>
<dbReference type="CDD" id="cd04164">
    <property type="entry name" value="trmE"/>
    <property type="match status" value="1"/>
</dbReference>
<dbReference type="Gene3D" id="3.40.50.300">
    <property type="entry name" value="P-loop containing nucleotide triphosphate hydrolases"/>
    <property type="match status" value="1"/>
</dbReference>
<dbReference type="Gene3D" id="3.30.1360.120">
    <property type="entry name" value="Probable tRNA modification gtpase trme, domain 1"/>
    <property type="match status" value="1"/>
</dbReference>
<dbReference type="Gene3D" id="1.20.120.430">
    <property type="entry name" value="tRNA modification GTPase MnmE domain 2"/>
    <property type="match status" value="1"/>
</dbReference>
<dbReference type="HAMAP" id="MF_00379">
    <property type="entry name" value="GTPase_MnmE"/>
    <property type="match status" value="1"/>
</dbReference>
<dbReference type="InterPro" id="IPR031168">
    <property type="entry name" value="G_TrmE"/>
</dbReference>
<dbReference type="InterPro" id="IPR006073">
    <property type="entry name" value="GTP-bd"/>
</dbReference>
<dbReference type="InterPro" id="IPR018948">
    <property type="entry name" value="GTP-bd_TrmE_N"/>
</dbReference>
<dbReference type="InterPro" id="IPR004520">
    <property type="entry name" value="GTPase_MnmE"/>
</dbReference>
<dbReference type="InterPro" id="IPR027368">
    <property type="entry name" value="MnmE_dom2"/>
</dbReference>
<dbReference type="InterPro" id="IPR025867">
    <property type="entry name" value="MnmE_helical"/>
</dbReference>
<dbReference type="InterPro" id="IPR027417">
    <property type="entry name" value="P-loop_NTPase"/>
</dbReference>
<dbReference type="InterPro" id="IPR005225">
    <property type="entry name" value="Small_GTP-bd"/>
</dbReference>
<dbReference type="InterPro" id="IPR027266">
    <property type="entry name" value="TrmE/GcvT_dom1"/>
</dbReference>
<dbReference type="NCBIfam" id="TIGR00231">
    <property type="entry name" value="small_GTP"/>
    <property type="match status" value="1"/>
</dbReference>
<dbReference type="PANTHER" id="PTHR42714">
    <property type="entry name" value="TRNA MODIFICATION GTPASE GTPBP3"/>
    <property type="match status" value="1"/>
</dbReference>
<dbReference type="PANTHER" id="PTHR42714:SF2">
    <property type="entry name" value="TRNA MODIFICATION GTPASE GTPBP3, MITOCHONDRIAL"/>
    <property type="match status" value="1"/>
</dbReference>
<dbReference type="Pfam" id="PF01926">
    <property type="entry name" value="MMR_HSR1"/>
    <property type="match status" value="1"/>
</dbReference>
<dbReference type="Pfam" id="PF12631">
    <property type="entry name" value="MnmE_helical"/>
    <property type="match status" value="1"/>
</dbReference>
<dbReference type="Pfam" id="PF10396">
    <property type="entry name" value="TrmE_N"/>
    <property type="match status" value="1"/>
</dbReference>
<dbReference type="SUPFAM" id="SSF103025">
    <property type="entry name" value="Folate-binding domain"/>
    <property type="match status" value="1"/>
</dbReference>
<dbReference type="SUPFAM" id="SSF52540">
    <property type="entry name" value="P-loop containing nucleoside triphosphate hydrolases"/>
    <property type="match status" value="1"/>
</dbReference>
<dbReference type="SUPFAM" id="SSF116878">
    <property type="entry name" value="TrmE connector domain"/>
    <property type="match status" value="1"/>
</dbReference>
<dbReference type="PROSITE" id="PS51709">
    <property type="entry name" value="G_TRME"/>
    <property type="match status" value="1"/>
</dbReference>
<feature type="chain" id="PRO_0000345889" description="tRNA modification GTPase MnmE">
    <location>
        <begin position="1"/>
        <end position="465"/>
    </location>
</feature>
<feature type="domain" description="TrmE-type G">
    <location>
        <begin position="222"/>
        <end position="386"/>
    </location>
</feature>
<feature type="binding site" evidence="1">
    <location>
        <position position="25"/>
    </location>
    <ligand>
        <name>(6S)-5-formyl-5,6,7,8-tetrahydrofolate</name>
        <dbReference type="ChEBI" id="CHEBI:57457"/>
    </ligand>
</feature>
<feature type="binding site" evidence="1">
    <location>
        <position position="87"/>
    </location>
    <ligand>
        <name>(6S)-5-formyl-5,6,7,8-tetrahydrofolate</name>
        <dbReference type="ChEBI" id="CHEBI:57457"/>
    </ligand>
</feature>
<feature type="binding site" evidence="1">
    <location>
        <position position="126"/>
    </location>
    <ligand>
        <name>(6S)-5-formyl-5,6,7,8-tetrahydrofolate</name>
        <dbReference type="ChEBI" id="CHEBI:57457"/>
    </ligand>
</feature>
<feature type="binding site" evidence="1">
    <location>
        <begin position="232"/>
        <end position="237"/>
    </location>
    <ligand>
        <name>GTP</name>
        <dbReference type="ChEBI" id="CHEBI:37565"/>
    </ligand>
</feature>
<feature type="binding site" evidence="1">
    <location>
        <position position="236"/>
    </location>
    <ligand>
        <name>Mg(2+)</name>
        <dbReference type="ChEBI" id="CHEBI:18420"/>
    </ligand>
</feature>
<feature type="binding site" evidence="1">
    <location>
        <begin position="251"/>
        <end position="257"/>
    </location>
    <ligand>
        <name>GTP</name>
        <dbReference type="ChEBI" id="CHEBI:37565"/>
    </ligand>
</feature>
<feature type="binding site" evidence="1">
    <location>
        <position position="257"/>
    </location>
    <ligand>
        <name>Mg(2+)</name>
        <dbReference type="ChEBI" id="CHEBI:18420"/>
    </ligand>
</feature>
<feature type="binding site" evidence="1">
    <location>
        <begin position="276"/>
        <end position="279"/>
    </location>
    <ligand>
        <name>GTP</name>
        <dbReference type="ChEBI" id="CHEBI:37565"/>
    </ligand>
</feature>
<feature type="binding site" evidence="1">
    <location>
        <position position="465"/>
    </location>
    <ligand>
        <name>(6S)-5-formyl-5,6,7,8-tetrahydrofolate</name>
        <dbReference type="ChEBI" id="CHEBI:57457"/>
    </ligand>
</feature>
<name>MNME_RHOBA</name>
<organism>
    <name type="scientific">Rhodopirellula baltica (strain DSM 10527 / NCIMB 13988 / SH1)</name>
    <dbReference type="NCBI Taxonomy" id="243090"/>
    <lineage>
        <taxon>Bacteria</taxon>
        <taxon>Pseudomonadati</taxon>
        <taxon>Planctomycetota</taxon>
        <taxon>Planctomycetia</taxon>
        <taxon>Pirellulales</taxon>
        <taxon>Pirellulaceae</taxon>
        <taxon>Rhodopirellula</taxon>
    </lineage>
</organism>
<proteinExistence type="inferred from homology"/>
<accession>Q7UJI3</accession>
<evidence type="ECO:0000255" key="1">
    <source>
        <dbReference type="HAMAP-Rule" id="MF_00379"/>
    </source>
</evidence>
<sequence length="465" mass="49534">MTSEADDTIAAIASPMTPAPRGIVRLSGHDCIDVLCRMKVLDTDEASGRRPFRSSKTLSLGEPLGAIEVDVMVWPTQRSYTGQPSAELHLIGSAPLLQSSLDAAIRAGARAARPGEFTMRSFLAGRLDLTQAEAVLGVIEAEDRGTLDQALSQLAGNLSRPLQAARSTLLDLLADVEAGLDFVDEDIEFISDEALIQRLDELRSLLLQTRSQLSDRGGASSTIRVVLRGLPNAGKSRLLNVLSRTESAIVTDQAGTTRDLVTVESSWGGHSFQLIDTAGSESREESDPEAPISQEAQLQAAEAARGADVHVWCIDATGGDGFESLKSPNAVLAEAKRSAQLICVATKRDLMPTDWNGESMRADLAVSSESGTGVDSLIERLVQFAEQRDAGETGSVIGTAARCQDSLAAAIEHLAQAIQWTEQAAGHELVAAEMRLAVEAIGEVTGQVYTDDILDRVFGRFCIGK</sequence>
<reference key="1">
    <citation type="journal article" date="2003" name="Proc. Natl. Acad. Sci. U.S.A.">
        <title>Complete genome sequence of the marine planctomycete Pirellula sp. strain 1.</title>
        <authorList>
            <person name="Gloeckner F.O."/>
            <person name="Kube M."/>
            <person name="Bauer M."/>
            <person name="Teeling H."/>
            <person name="Lombardot T."/>
            <person name="Ludwig W."/>
            <person name="Gade D."/>
            <person name="Beck A."/>
            <person name="Borzym K."/>
            <person name="Heitmann K."/>
            <person name="Rabus R."/>
            <person name="Schlesner H."/>
            <person name="Amann R."/>
            <person name="Reinhardt R."/>
        </authorList>
    </citation>
    <scope>NUCLEOTIDE SEQUENCE [LARGE SCALE GENOMIC DNA]</scope>
    <source>
        <strain>DSM 10527 / NCIMB 13988 / SH1</strain>
    </source>
</reference>
<protein>
    <recommendedName>
        <fullName evidence="1">tRNA modification GTPase MnmE</fullName>
        <ecNumber evidence="1">3.6.-.-</ecNumber>
    </recommendedName>
</protein>